<name>GLRX4_ECOL6</name>
<reference key="1">
    <citation type="journal article" date="2002" name="Proc. Natl. Acad. Sci. U.S.A.">
        <title>Extensive mosaic structure revealed by the complete genome sequence of uropathogenic Escherichia coli.</title>
        <authorList>
            <person name="Welch R.A."/>
            <person name="Burland V."/>
            <person name="Plunkett G. III"/>
            <person name="Redford P."/>
            <person name="Roesch P."/>
            <person name="Rasko D."/>
            <person name="Buckles E.L."/>
            <person name="Liou S.-R."/>
            <person name="Boutin A."/>
            <person name="Hackett J."/>
            <person name="Stroud D."/>
            <person name="Mayhew G.F."/>
            <person name="Rose D.J."/>
            <person name="Zhou S."/>
            <person name="Schwartz D.C."/>
            <person name="Perna N.T."/>
            <person name="Mobley H.L.T."/>
            <person name="Donnenberg M.S."/>
            <person name="Blattner F.R."/>
        </authorList>
    </citation>
    <scope>NUCLEOTIDE SEQUENCE [LARGE SCALE GENOMIC DNA]</scope>
    <source>
        <strain>CFT073 / ATCC 700928 / UPEC</strain>
    </source>
</reference>
<keyword id="KW-0001">2Fe-2S</keyword>
<keyword id="KW-0963">Cytoplasm</keyword>
<keyword id="KW-0408">Iron</keyword>
<keyword id="KW-0411">Iron-sulfur</keyword>
<keyword id="KW-0479">Metal-binding</keyword>
<keyword id="KW-0676">Redox-active center</keyword>
<keyword id="KW-1185">Reference proteome</keyword>
<gene>
    <name type="primary">grxD</name>
    <name type="synonym">ydhD</name>
    <name type="ordered locus">c2048</name>
</gene>
<feature type="chain" id="PRO_0000102259" description="Glutaredoxin 4">
    <location>
        <begin position="1"/>
        <end position="115"/>
    </location>
</feature>
<feature type="domain" description="Glutaredoxin" evidence="2">
    <location>
        <begin position="5"/>
        <end position="107"/>
    </location>
</feature>
<feature type="binding site" evidence="1">
    <location>
        <position position="22"/>
    </location>
    <ligand>
        <name>glutathione</name>
        <dbReference type="ChEBI" id="CHEBI:57925"/>
    </ligand>
</feature>
<feature type="binding site" evidence="1">
    <location>
        <position position="30"/>
    </location>
    <ligand>
        <name>[2Fe-2S] cluster</name>
        <dbReference type="ChEBI" id="CHEBI:190135"/>
        <note>ligand shared between dimeric partners</note>
    </ligand>
</feature>
<feature type="binding site" evidence="1">
    <location>
        <position position="59"/>
    </location>
    <ligand>
        <name>glutathione</name>
        <dbReference type="ChEBI" id="CHEBI:57925"/>
    </ligand>
</feature>
<feature type="binding site" evidence="1">
    <location>
        <position position="71"/>
    </location>
    <ligand>
        <name>glutathione</name>
        <dbReference type="ChEBI" id="CHEBI:57925"/>
    </ligand>
</feature>
<feature type="binding site" evidence="1">
    <location>
        <begin position="84"/>
        <end position="85"/>
    </location>
    <ligand>
        <name>glutathione</name>
        <dbReference type="ChEBI" id="CHEBI:57925"/>
    </ligand>
</feature>
<organism>
    <name type="scientific">Escherichia coli O6:H1 (strain CFT073 / ATCC 700928 / UPEC)</name>
    <dbReference type="NCBI Taxonomy" id="199310"/>
    <lineage>
        <taxon>Bacteria</taxon>
        <taxon>Pseudomonadati</taxon>
        <taxon>Pseudomonadota</taxon>
        <taxon>Gammaproteobacteria</taxon>
        <taxon>Enterobacterales</taxon>
        <taxon>Enterobacteriaceae</taxon>
        <taxon>Escherichia</taxon>
    </lineage>
</organism>
<protein>
    <recommendedName>
        <fullName>Glutaredoxin 4</fullName>
        <shortName>Grx4</shortName>
    </recommendedName>
    <alternativeName>
        <fullName>Monothiol glutaredoxin</fullName>
    </alternativeName>
</protein>
<dbReference type="EMBL" id="AE014075">
    <property type="protein sequence ID" value="AAN80508.1"/>
    <property type="molecule type" value="Genomic_DNA"/>
</dbReference>
<dbReference type="RefSeq" id="WP_000108172.1">
    <property type="nucleotide sequence ID" value="NZ_CP051263.1"/>
</dbReference>
<dbReference type="SMR" id="P0AC70"/>
<dbReference type="STRING" id="199310.c2048"/>
<dbReference type="GeneID" id="89516419"/>
<dbReference type="KEGG" id="ecc:c2048"/>
<dbReference type="eggNOG" id="COG0278">
    <property type="taxonomic scope" value="Bacteria"/>
</dbReference>
<dbReference type="HOGENOM" id="CLU_026126_2_1_6"/>
<dbReference type="BioCyc" id="ECOL199310:C2048-MONOMER"/>
<dbReference type="Proteomes" id="UP000001410">
    <property type="component" value="Chromosome"/>
</dbReference>
<dbReference type="GO" id="GO:0005737">
    <property type="term" value="C:cytoplasm"/>
    <property type="evidence" value="ECO:0007669"/>
    <property type="project" value="UniProtKB-SubCell"/>
</dbReference>
<dbReference type="GO" id="GO:0051537">
    <property type="term" value="F:2 iron, 2 sulfur cluster binding"/>
    <property type="evidence" value="ECO:0007669"/>
    <property type="project" value="UniProtKB-KW"/>
</dbReference>
<dbReference type="GO" id="GO:0015036">
    <property type="term" value="F:disulfide oxidoreductase activity"/>
    <property type="evidence" value="ECO:0007669"/>
    <property type="project" value="InterPro"/>
</dbReference>
<dbReference type="GO" id="GO:0046872">
    <property type="term" value="F:metal ion binding"/>
    <property type="evidence" value="ECO:0007669"/>
    <property type="project" value="UniProtKB-KW"/>
</dbReference>
<dbReference type="CDD" id="cd03028">
    <property type="entry name" value="GRX_PICOT_like"/>
    <property type="match status" value="1"/>
</dbReference>
<dbReference type="FunFam" id="3.40.30.10:FF:000006">
    <property type="entry name" value="Glutaredoxin"/>
    <property type="match status" value="1"/>
</dbReference>
<dbReference type="Gene3D" id="3.40.30.10">
    <property type="entry name" value="Glutaredoxin"/>
    <property type="match status" value="1"/>
</dbReference>
<dbReference type="InterPro" id="IPR002109">
    <property type="entry name" value="Glutaredoxin"/>
</dbReference>
<dbReference type="InterPro" id="IPR033658">
    <property type="entry name" value="GRX_PICOT-like"/>
</dbReference>
<dbReference type="InterPro" id="IPR014434">
    <property type="entry name" value="Monothiol_GRX"/>
</dbReference>
<dbReference type="InterPro" id="IPR004480">
    <property type="entry name" value="Monothiol_GRX-rel"/>
</dbReference>
<dbReference type="InterPro" id="IPR036249">
    <property type="entry name" value="Thioredoxin-like_sf"/>
</dbReference>
<dbReference type="NCBIfam" id="TIGR00365">
    <property type="entry name" value="Grx4 family monothiol glutaredoxin"/>
    <property type="match status" value="1"/>
</dbReference>
<dbReference type="NCBIfam" id="NF008086">
    <property type="entry name" value="PRK10824.1"/>
    <property type="match status" value="1"/>
</dbReference>
<dbReference type="PANTHER" id="PTHR10293">
    <property type="entry name" value="GLUTAREDOXIN FAMILY MEMBER"/>
    <property type="match status" value="1"/>
</dbReference>
<dbReference type="PANTHER" id="PTHR10293:SF72">
    <property type="entry name" value="MONOTHIOL GLUTAREDOXIN-S14, CHLOROPLASTIC"/>
    <property type="match status" value="1"/>
</dbReference>
<dbReference type="Pfam" id="PF00462">
    <property type="entry name" value="Glutaredoxin"/>
    <property type="match status" value="1"/>
</dbReference>
<dbReference type="PIRSF" id="PIRSF005894">
    <property type="entry name" value="Monothiol_GRX"/>
    <property type="match status" value="1"/>
</dbReference>
<dbReference type="SUPFAM" id="SSF52833">
    <property type="entry name" value="Thioredoxin-like"/>
    <property type="match status" value="1"/>
</dbReference>
<dbReference type="PROSITE" id="PS51354">
    <property type="entry name" value="GLUTAREDOXIN_2"/>
    <property type="match status" value="1"/>
</dbReference>
<proteinExistence type="inferred from homology"/>
<comment type="function">
    <text evidence="1">Monothiol glutaredoxin involved in the biogenesis of iron-sulfur clusters.</text>
</comment>
<comment type="subunit">
    <text evidence="1">Homodimer.</text>
</comment>
<comment type="subcellular location">
    <subcellularLocation>
        <location evidence="1">Cytoplasm</location>
    </subcellularLocation>
</comment>
<comment type="similarity">
    <text evidence="3">Belongs to the glutaredoxin family. Monothiol subfamily.</text>
</comment>
<sequence>MSTTIEKIQRQIAENPILLYMKGSPKLPSCGFSAQAVQALAACGERFAYVDILQNPDIRAELPKYANWPTFPQLWVDGELVGGCDIVIEMYQRGELQQLIKETAAKYKSEEPDAE</sequence>
<accession>P0AC70</accession>
<accession>P37010</accession>
<accession>P77424</accession>
<evidence type="ECO:0000250" key="1"/>
<evidence type="ECO:0000255" key="2">
    <source>
        <dbReference type="PROSITE-ProRule" id="PRU00686"/>
    </source>
</evidence>
<evidence type="ECO:0000305" key="3"/>